<protein>
    <recommendedName>
        <fullName evidence="4">L-ornithine N(5)-oxygenase</fullName>
        <shortName evidence="4">LOO</shortName>
        <ecNumber evidence="6">1.14.13.196</ecNumber>
    </recommendedName>
    <alternativeName>
        <fullName evidence="2">L-ornithine N(5)-monooxygenase</fullName>
        <shortName evidence="2">OMO</shortName>
    </alternativeName>
</protein>
<comment type="function">
    <text evidence="3 6">L-ornithine N(5)-oxygenase; part of the gene cluster that mediates the biosynthesis of desferriferrichrome that chelates Fe(3+) to form ferrichrome (PubMed:38340066). Fe(3+) is a key factor for induction of trap formation and the fungus uses the iron chelating desferriferrichrome to sequester Fe(3+) to inhibit trap formation and increase nematicidal activity (PubMed:38340066). The biosynthesis of desferriferrichrome requires the action of the L-ornithine N(5)-oxygenase (LOO) Ao414 that hydroxylates L-ornithine at N(5), resulting in the formation of N(5)-hydroxyl-L-ornithine, which is subsequently N-acetylated to yield N(5)-acetyl-N(5)-hydroxy-L-ornithine (L-AHO). L-AHO harbors one hydroxamate moiety, which is the key core responsible for chelating iron. Then, L-AHO is further condensated with glycines to form desferriferrichrome through the NRPS protein Ao415 (Probable).</text>
</comment>
<comment type="catalytic activity">
    <reaction evidence="6">
        <text>L-ornithine + NADH + O2 = N(5)-hydroxy-L-ornithine + NAD(+) + H2O</text>
        <dbReference type="Rhea" id="RHEA:41512"/>
        <dbReference type="ChEBI" id="CHEBI:15377"/>
        <dbReference type="ChEBI" id="CHEBI:15379"/>
        <dbReference type="ChEBI" id="CHEBI:46911"/>
        <dbReference type="ChEBI" id="CHEBI:57540"/>
        <dbReference type="ChEBI" id="CHEBI:57945"/>
        <dbReference type="ChEBI" id="CHEBI:78275"/>
        <dbReference type="EC" id="1.14.13.196"/>
    </reaction>
</comment>
<comment type="catalytic activity">
    <reaction evidence="6">
        <text>L-ornithine + NADPH + O2 = N(5)-hydroxy-L-ornithine + NADP(+) + H2O</text>
        <dbReference type="Rhea" id="RHEA:41508"/>
        <dbReference type="ChEBI" id="CHEBI:15377"/>
        <dbReference type="ChEBI" id="CHEBI:15379"/>
        <dbReference type="ChEBI" id="CHEBI:46911"/>
        <dbReference type="ChEBI" id="CHEBI:57783"/>
        <dbReference type="ChEBI" id="CHEBI:58349"/>
        <dbReference type="ChEBI" id="CHEBI:78275"/>
        <dbReference type="EC" id="1.14.13.196"/>
    </reaction>
</comment>
<comment type="cofactor">
    <cofactor evidence="1">
        <name>FAD</name>
        <dbReference type="ChEBI" id="CHEBI:57692"/>
    </cofactor>
    <text evidence="1">Binds 1 FAD per subunit.</text>
</comment>
<comment type="pathway">
    <text evidence="3">Siderophore biosynthesis.</text>
</comment>
<comment type="subunit">
    <text evidence="1">Homotetramer.</text>
</comment>
<comment type="disruption phenotype">
    <text evidence="3">Impairs the production of desferriferrichrome and ferrichrome (PubMed:38340066). Displays sharply decreased conidial formations and exhibits significantly retarded conidial germination (PubMed:38340066). Shows tremendous increases in the nematode-induced trap formation (PubMed:38340066).</text>
</comment>
<comment type="similarity">
    <text evidence="5">Belongs to the lysine N(6)-hydroxylase/L-ornithine N(5)-oxygenase family.</text>
</comment>
<keyword id="KW-0274">FAD</keyword>
<keyword id="KW-0285">Flavoprotein</keyword>
<keyword id="KW-0503">Monooxygenase</keyword>
<keyword id="KW-0521">NADP</keyword>
<keyword id="KW-0560">Oxidoreductase</keyword>
<keyword id="KW-1185">Reference proteome</keyword>
<name>AO414_ARTOA</name>
<proteinExistence type="inferred from homology"/>
<organism>
    <name type="scientific">Arthrobotrys oligospora (strain ATCC 24927 / CBS 115.81 / DSM 1491)</name>
    <name type="common">Nematode-trapping fungus</name>
    <name type="synonym">Didymozoophaga oligospora</name>
    <dbReference type="NCBI Taxonomy" id="756982"/>
    <lineage>
        <taxon>Eukaryota</taxon>
        <taxon>Fungi</taxon>
        <taxon>Dikarya</taxon>
        <taxon>Ascomycota</taxon>
        <taxon>Pezizomycotina</taxon>
        <taxon>Orbiliomycetes</taxon>
        <taxon>Orbiliales</taxon>
        <taxon>Orbiliaceae</taxon>
        <taxon>Orbilia</taxon>
        <taxon>Orbilia oligospora</taxon>
    </lineage>
</organism>
<feature type="chain" id="PRO_0000461391" description="L-ornithine N(5)-oxygenase">
    <location>
        <begin position="1"/>
        <end position="485"/>
    </location>
</feature>
<feature type="binding site" evidence="1">
    <location>
        <begin position="49"/>
        <end position="57"/>
    </location>
    <ligand>
        <name>FAD</name>
        <dbReference type="ChEBI" id="CHEBI:57692"/>
    </ligand>
</feature>
<feature type="binding site" evidence="1">
    <location>
        <position position="68"/>
    </location>
    <ligand>
        <name>FAD</name>
        <dbReference type="ChEBI" id="CHEBI:57692"/>
    </ligand>
</feature>
<feature type="binding site" evidence="1">
    <location>
        <position position="73"/>
    </location>
    <ligand>
        <name>L-ornithine</name>
        <dbReference type="ChEBI" id="CHEBI:46911"/>
    </ligand>
</feature>
<feature type="binding site" evidence="1">
    <location>
        <position position="134"/>
    </location>
    <ligand>
        <name>FAD</name>
        <dbReference type="ChEBI" id="CHEBI:57692"/>
    </ligand>
</feature>
<feature type="binding site" evidence="1">
    <location>
        <position position="243"/>
    </location>
    <ligand>
        <name>NADP(+)</name>
        <dbReference type="ChEBI" id="CHEBI:58349"/>
    </ligand>
</feature>
<feature type="binding site" evidence="1">
    <location>
        <begin position="257"/>
        <end position="260"/>
    </location>
    <ligand>
        <name>L-ornithine</name>
        <dbReference type="ChEBI" id="CHEBI:46911"/>
    </ligand>
</feature>
<feature type="binding site" evidence="1">
    <location>
        <begin position="287"/>
        <end position="289"/>
    </location>
    <ligand>
        <name>NADP(+)</name>
        <dbReference type="ChEBI" id="CHEBI:58349"/>
    </ligand>
</feature>
<feature type="binding site" evidence="1">
    <location>
        <position position="287"/>
    </location>
    <ligand>
        <name>L-ornithine</name>
        <dbReference type="ChEBI" id="CHEBI:46911"/>
    </ligand>
</feature>
<feature type="binding site" evidence="1">
    <location>
        <begin position="425"/>
        <end position="427"/>
    </location>
    <ligand>
        <name>FAD</name>
        <dbReference type="ChEBI" id="CHEBI:57692"/>
    </ligand>
</feature>
<feature type="binding site" evidence="1">
    <location>
        <position position="428"/>
    </location>
    <ligand>
        <name>L-ornithine</name>
        <dbReference type="ChEBI" id="CHEBI:46911"/>
    </ligand>
</feature>
<accession>G1XSR6</accession>
<reference key="1">
    <citation type="journal article" date="2011" name="PLoS Pathog.">
        <title>Genomic and proteomic analyses of the fungus Arthrobotrys oligospora provide insights into nematode-trap formation.</title>
        <authorList>
            <person name="Yang J."/>
            <person name="Wang L."/>
            <person name="Ji X."/>
            <person name="Feng Y."/>
            <person name="Li X."/>
            <person name="Zou C."/>
            <person name="Xu J."/>
            <person name="Ren Y."/>
            <person name="Mi Q."/>
            <person name="Wu J."/>
            <person name="Liu S."/>
            <person name="Liu Y."/>
            <person name="Huang X."/>
            <person name="Wang H."/>
            <person name="Niu X."/>
            <person name="Li J."/>
            <person name="Liang L."/>
            <person name="Luo Y."/>
            <person name="Ji K."/>
            <person name="Zhou W."/>
            <person name="Yu Z."/>
            <person name="Li G."/>
            <person name="Liu Y."/>
            <person name="Li L."/>
            <person name="Qiao M."/>
            <person name="Feng L."/>
            <person name="Zhang K.-Q."/>
        </authorList>
    </citation>
    <scope>NUCLEOTIDE SEQUENCE [LARGE SCALE GENOMIC DNA]</scope>
    <source>
        <strain>ATCC 24927 / CBS 115.81 / DSM 1491</strain>
    </source>
</reference>
<reference key="2">
    <citation type="journal article" date="2024" name="J. Agric. Food Chem.">
        <title>Rare NRPS gene cluster for desferriferrichrome biosynthesis controls the conflict between trap formation and nematicidal activity in Arthrobotrys oligospora.</title>
        <authorList>
            <person name="Zhou J."/>
            <person name="Wang D."/>
            <person name="Wu Q."/>
            <person name="Jiang Y."/>
            <person name="Yan J."/>
            <person name="Wu L."/>
            <person name="Li S."/>
            <person name="Niu X."/>
        </authorList>
    </citation>
    <scope>FUNCTION</scope>
    <scope>DISRUPTION PHENOTYPE</scope>
    <scope>PATHWAY</scope>
</reference>
<sequence>MGQYSVESHENGEKVYDLICVGFGPASLAIAIAIQEMLPEARPNVLFLERQQQFVWHSGMLLPGSKMQISFIKDLATLRNPQSSFTFLNYLKENGRLLDFINLGTFLPLREEFNDYLQWCASKFANLVSYGETVTLVEPVKNNNTGKVDNFVVHSKVGGIEETRRAKHVVVAVGGRPLLPKPLPEYHPRIVHSSQYSSRVPQNLTDRNAAYRIAVIGAGQSAAETFSDVASRYPNAQTTMFLRGDSLKPSDDSPFVNEIFNPSATDKFFQTPAAERHQQLVENRATNYSVVRLELIEKIYNDLYVQRLRDPSGASWKMNIKNHTEVTGFKNLSEKTVGLQMTHRENGLETVENHEFDLVIVATGYARDMHQQILDPTRELLEDATVARFPINRDYRVQFSGEKVSSDAGIYLQGCNETTHGLSDTLLSVLAVRAGEVVESIFMKSASNGHSNGHSNGHASKVSAKKAEVYTNGNGHNGVTSNGYH</sequence>
<evidence type="ECO:0000250" key="1">
    <source>
        <dbReference type="UniProtKB" id="E9QYP0"/>
    </source>
</evidence>
<evidence type="ECO:0000250" key="2">
    <source>
        <dbReference type="UniProtKB" id="G5EB76"/>
    </source>
</evidence>
<evidence type="ECO:0000269" key="3">
    <source>
    </source>
</evidence>
<evidence type="ECO:0000303" key="4">
    <source>
    </source>
</evidence>
<evidence type="ECO:0000305" key="5"/>
<evidence type="ECO:0000305" key="6">
    <source>
    </source>
</evidence>
<gene>
    <name evidence="4" type="primary">Ao414</name>
    <name type="ORF">AOL_s00215g414</name>
</gene>
<dbReference type="EC" id="1.14.13.196" evidence="6"/>
<dbReference type="EMBL" id="ADOT01000316">
    <property type="protein sequence ID" value="EGX43678.1"/>
    <property type="molecule type" value="Genomic_DNA"/>
</dbReference>
<dbReference type="RefSeq" id="XP_011127918.1">
    <property type="nucleotide sequence ID" value="XM_011129616.1"/>
</dbReference>
<dbReference type="SMR" id="G1XSR6"/>
<dbReference type="STRING" id="756982.G1XSR6"/>
<dbReference type="GeneID" id="22898840"/>
<dbReference type="eggNOG" id="KOG1399">
    <property type="taxonomic scope" value="Eukaryota"/>
</dbReference>
<dbReference type="HOGENOM" id="CLU_020931_2_0_1"/>
<dbReference type="InParanoid" id="G1XSR6"/>
<dbReference type="OMA" id="FYIRESF"/>
<dbReference type="OrthoDB" id="93709at4890"/>
<dbReference type="Proteomes" id="UP000008784">
    <property type="component" value="Unassembled WGS sequence"/>
</dbReference>
<dbReference type="GO" id="GO:0004497">
    <property type="term" value="F:monooxygenase activity"/>
    <property type="evidence" value="ECO:0007669"/>
    <property type="project" value="UniProtKB-KW"/>
</dbReference>
<dbReference type="GO" id="GO:0009058">
    <property type="term" value="P:biosynthetic process"/>
    <property type="evidence" value="ECO:0007669"/>
    <property type="project" value="UniProtKB-ARBA"/>
</dbReference>
<dbReference type="GO" id="GO:0006879">
    <property type="term" value="P:intracellular iron ion homeostasis"/>
    <property type="evidence" value="ECO:0007669"/>
    <property type="project" value="TreeGrafter"/>
</dbReference>
<dbReference type="Gene3D" id="3.50.50.60">
    <property type="entry name" value="FAD/NAD(P)-binding domain"/>
    <property type="match status" value="1"/>
</dbReference>
<dbReference type="InterPro" id="IPR036188">
    <property type="entry name" value="FAD/NAD-bd_sf"/>
</dbReference>
<dbReference type="InterPro" id="IPR025700">
    <property type="entry name" value="Lys/Orn_oxygenase"/>
</dbReference>
<dbReference type="PANTHER" id="PTHR42802:SF1">
    <property type="entry name" value="L-ORNITHINE N(5)-MONOOXYGENASE"/>
    <property type="match status" value="1"/>
</dbReference>
<dbReference type="PANTHER" id="PTHR42802">
    <property type="entry name" value="MONOOXYGENASE"/>
    <property type="match status" value="1"/>
</dbReference>
<dbReference type="Pfam" id="PF13434">
    <property type="entry name" value="Lys_Orn_oxgnase"/>
    <property type="match status" value="1"/>
</dbReference>
<dbReference type="PRINTS" id="PR00368">
    <property type="entry name" value="FADPNR"/>
</dbReference>
<dbReference type="SUPFAM" id="SSF51905">
    <property type="entry name" value="FAD/NAD(P)-binding domain"/>
    <property type="match status" value="2"/>
</dbReference>